<proteinExistence type="inferred from homology"/>
<reference key="1">
    <citation type="journal article" date="2007" name="PLoS Biol.">
        <title>Evolution of symbiotic bacteria in the distal human intestine.</title>
        <authorList>
            <person name="Xu J."/>
            <person name="Mahowald M.A."/>
            <person name="Ley R.E."/>
            <person name="Lozupone C.A."/>
            <person name="Hamady M."/>
            <person name="Martens E.C."/>
            <person name="Henrissat B."/>
            <person name="Coutinho P.M."/>
            <person name="Minx P."/>
            <person name="Latreille P."/>
            <person name="Cordum H."/>
            <person name="Van Brunt A."/>
            <person name="Kim K."/>
            <person name="Fulton R.S."/>
            <person name="Fulton L.A."/>
            <person name="Clifton S.W."/>
            <person name="Wilson R.K."/>
            <person name="Knight R.D."/>
            <person name="Gordon J.I."/>
        </authorList>
    </citation>
    <scope>NUCLEOTIDE SEQUENCE [LARGE SCALE GENOMIC DNA]</scope>
    <source>
        <strain>ATCC 8482 / DSM 1447 / JCM 5826 / CCUG 4940 / NBRC 14291 / NCTC 11154</strain>
    </source>
</reference>
<organism>
    <name type="scientific">Phocaeicola vulgatus (strain ATCC 8482 / DSM 1447 / JCM 5826 / CCUG 4940 / NBRC 14291 / NCTC 11154)</name>
    <name type="common">Bacteroides vulgatus</name>
    <dbReference type="NCBI Taxonomy" id="435590"/>
    <lineage>
        <taxon>Bacteria</taxon>
        <taxon>Pseudomonadati</taxon>
        <taxon>Bacteroidota</taxon>
        <taxon>Bacteroidia</taxon>
        <taxon>Bacteroidales</taxon>
        <taxon>Bacteroidaceae</taxon>
        <taxon>Phocaeicola</taxon>
    </lineage>
</organism>
<keyword id="KW-0021">Allosteric enzyme</keyword>
<keyword id="KW-0119">Carbohydrate metabolism</keyword>
<keyword id="KW-0378">Hydrolase</keyword>
<dbReference type="EC" id="3.5.99.6" evidence="1"/>
<dbReference type="EMBL" id="CP000139">
    <property type="protein sequence ID" value="ABR41722.1"/>
    <property type="molecule type" value="Genomic_DNA"/>
</dbReference>
<dbReference type="RefSeq" id="WP_005839711.1">
    <property type="nucleotide sequence ID" value="NZ_JANSWM010000087.1"/>
</dbReference>
<dbReference type="SMR" id="A6L7Q8"/>
<dbReference type="STRING" id="435590.BVU_4120"/>
<dbReference type="PaxDb" id="435590-BVU_4120"/>
<dbReference type="GeneID" id="5305079"/>
<dbReference type="KEGG" id="bvu:BVU_4120"/>
<dbReference type="eggNOG" id="COG0363">
    <property type="taxonomic scope" value="Bacteria"/>
</dbReference>
<dbReference type="HOGENOM" id="CLU_049611_0_1_10"/>
<dbReference type="BioCyc" id="BVUL435590:G1G59-4258-MONOMER"/>
<dbReference type="UniPathway" id="UPA00629">
    <property type="reaction ID" value="UER00684"/>
</dbReference>
<dbReference type="Proteomes" id="UP000002861">
    <property type="component" value="Chromosome"/>
</dbReference>
<dbReference type="GO" id="GO:0005737">
    <property type="term" value="C:cytoplasm"/>
    <property type="evidence" value="ECO:0007669"/>
    <property type="project" value="TreeGrafter"/>
</dbReference>
<dbReference type="GO" id="GO:0004342">
    <property type="term" value="F:glucosamine-6-phosphate deaminase activity"/>
    <property type="evidence" value="ECO:0007669"/>
    <property type="project" value="UniProtKB-UniRule"/>
</dbReference>
<dbReference type="GO" id="GO:0042802">
    <property type="term" value="F:identical protein binding"/>
    <property type="evidence" value="ECO:0007669"/>
    <property type="project" value="TreeGrafter"/>
</dbReference>
<dbReference type="GO" id="GO:0005975">
    <property type="term" value="P:carbohydrate metabolic process"/>
    <property type="evidence" value="ECO:0007669"/>
    <property type="project" value="InterPro"/>
</dbReference>
<dbReference type="GO" id="GO:0006043">
    <property type="term" value="P:glucosamine catabolic process"/>
    <property type="evidence" value="ECO:0007669"/>
    <property type="project" value="TreeGrafter"/>
</dbReference>
<dbReference type="GO" id="GO:0006046">
    <property type="term" value="P:N-acetylglucosamine catabolic process"/>
    <property type="evidence" value="ECO:0007669"/>
    <property type="project" value="TreeGrafter"/>
</dbReference>
<dbReference type="GO" id="GO:0019262">
    <property type="term" value="P:N-acetylneuraminate catabolic process"/>
    <property type="evidence" value="ECO:0007669"/>
    <property type="project" value="UniProtKB-UniRule"/>
</dbReference>
<dbReference type="CDD" id="cd01399">
    <property type="entry name" value="GlcN6P_deaminase"/>
    <property type="match status" value="1"/>
</dbReference>
<dbReference type="FunFam" id="3.40.50.1360:FF:000002">
    <property type="entry name" value="Glucosamine-6-phosphate deaminase"/>
    <property type="match status" value="1"/>
</dbReference>
<dbReference type="Gene3D" id="3.40.50.1360">
    <property type="match status" value="1"/>
</dbReference>
<dbReference type="HAMAP" id="MF_01241">
    <property type="entry name" value="GlcN6P_deamin"/>
    <property type="match status" value="1"/>
</dbReference>
<dbReference type="InterPro" id="IPR006148">
    <property type="entry name" value="Glc/Gal-6P_isomerase"/>
</dbReference>
<dbReference type="InterPro" id="IPR004547">
    <property type="entry name" value="Glucosamine6P_isomerase"/>
</dbReference>
<dbReference type="InterPro" id="IPR018321">
    <property type="entry name" value="Glucosamine6P_isomerase_CS"/>
</dbReference>
<dbReference type="InterPro" id="IPR037171">
    <property type="entry name" value="NagB/RpiA_transferase-like"/>
</dbReference>
<dbReference type="NCBIfam" id="TIGR00502">
    <property type="entry name" value="nagB"/>
    <property type="match status" value="1"/>
</dbReference>
<dbReference type="PANTHER" id="PTHR11280">
    <property type="entry name" value="GLUCOSAMINE-6-PHOSPHATE ISOMERASE"/>
    <property type="match status" value="1"/>
</dbReference>
<dbReference type="PANTHER" id="PTHR11280:SF5">
    <property type="entry name" value="GLUCOSAMINE-6-PHOSPHATE ISOMERASE"/>
    <property type="match status" value="1"/>
</dbReference>
<dbReference type="Pfam" id="PF01182">
    <property type="entry name" value="Glucosamine_iso"/>
    <property type="match status" value="1"/>
</dbReference>
<dbReference type="SUPFAM" id="SSF100950">
    <property type="entry name" value="NagB/RpiA/CoA transferase-like"/>
    <property type="match status" value="1"/>
</dbReference>
<dbReference type="PROSITE" id="PS01161">
    <property type="entry name" value="GLC_GALNAC_ISOMERASE"/>
    <property type="match status" value="1"/>
</dbReference>
<name>NAGB_PHOV8</name>
<evidence type="ECO:0000255" key="1">
    <source>
        <dbReference type="HAMAP-Rule" id="MF_01241"/>
    </source>
</evidence>
<feature type="chain" id="PRO_1000066962" description="Glucosamine-6-phosphate deaminase">
    <location>
        <begin position="1"/>
        <end position="263"/>
    </location>
</feature>
<feature type="active site" description="Proton acceptor; for enolization step" evidence="1">
    <location>
        <position position="72"/>
    </location>
</feature>
<feature type="active site" description="For ring-opening step" evidence="1">
    <location>
        <position position="141"/>
    </location>
</feature>
<feature type="active site" description="Proton acceptor; for ring-opening step" evidence="1">
    <location>
        <position position="143"/>
    </location>
</feature>
<feature type="active site" description="For ring-opening step" evidence="1">
    <location>
        <position position="148"/>
    </location>
</feature>
<feature type="site" description="Part of the allosteric site" evidence="1">
    <location>
        <position position="151"/>
    </location>
</feature>
<feature type="site" description="Part of the allosteric site" evidence="1">
    <location>
        <position position="158"/>
    </location>
</feature>
<feature type="site" description="Part of the allosteric site" evidence="1">
    <location>
        <position position="160"/>
    </location>
</feature>
<feature type="site" description="Part of the allosteric site" evidence="1">
    <location>
        <position position="161"/>
    </location>
</feature>
<feature type="site" description="Part of the allosteric site" evidence="1">
    <location>
        <position position="254"/>
    </location>
</feature>
<gene>
    <name evidence="1" type="primary">nagB</name>
    <name type="ordered locus">BVU_4120</name>
</gene>
<sequence length="263" mass="29020">MRVIIESDYQALSQWAANYVASKINAANPTPEKPFVLGCPTGSSPLGMYKALIELNKQGKVSFQNVVTFNMDEYVGLPEDHPESYHTFMWKNFFNHIDIKKENVHILNGNAEDLEAECANYEKQIAEIGGIDLFMGGIGPDGHIAFNEPGSSLSSRTRIKTLTTDTIIANSRFFDNDVNKVPKTALTVGVGTVLSAKEVLIICNGHNKARALQHAVEGGITQMWTISALQMHQHGIIVCDEAATDELKVGTYKYFKDIEKANL</sequence>
<accession>A6L7Q8</accession>
<protein>
    <recommendedName>
        <fullName evidence="1">Glucosamine-6-phosphate deaminase</fullName>
        <ecNumber evidence="1">3.5.99.6</ecNumber>
    </recommendedName>
    <alternativeName>
        <fullName evidence="1">GlcN6P deaminase</fullName>
        <shortName evidence="1">GNPDA</shortName>
    </alternativeName>
    <alternativeName>
        <fullName evidence="1">Glucosamine-6-phosphate isomerase</fullName>
    </alternativeName>
</protein>
<comment type="function">
    <text evidence="1">Catalyzes the reversible isomerization-deamination of glucosamine 6-phosphate (GlcN6P) to form fructose 6-phosphate (Fru6P) and ammonium ion.</text>
</comment>
<comment type="catalytic activity">
    <reaction evidence="1">
        <text>alpha-D-glucosamine 6-phosphate + H2O = beta-D-fructose 6-phosphate + NH4(+)</text>
        <dbReference type="Rhea" id="RHEA:12172"/>
        <dbReference type="ChEBI" id="CHEBI:15377"/>
        <dbReference type="ChEBI" id="CHEBI:28938"/>
        <dbReference type="ChEBI" id="CHEBI:57634"/>
        <dbReference type="ChEBI" id="CHEBI:75989"/>
        <dbReference type="EC" id="3.5.99.6"/>
    </reaction>
</comment>
<comment type="activity regulation">
    <text evidence="1">Allosterically activated by N-acetylglucosamine 6-phosphate (GlcNAc6P).</text>
</comment>
<comment type="pathway">
    <text evidence="1">Amino-sugar metabolism; N-acetylneuraminate degradation; D-fructose 6-phosphate from N-acetylneuraminate: step 5/5.</text>
</comment>
<comment type="similarity">
    <text evidence="1">Belongs to the glucosamine/galactosamine-6-phosphate isomerase family. NagB subfamily.</text>
</comment>